<protein>
    <recommendedName>
        <fullName>Alpha-amylase inhibitor</fullName>
    </recommendedName>
</protein>
<proteinExistence type="evidence at protein level"/>
<feature type="chain" id="PRO_0000070492" description="Alpha-amylase inhibitor">
    <location>
        <begin position="1"/>
        <end position="25" status="greater than"/>
    </location>
</feature>
<feature type="non-terminal residue" evidence="2">
    <location>
        <position position="25"/>
    </location>
</feature>
<organism evidence="3">
    <name type="scientific">Secale cereale</name>
    <name type="common">Rye</name>
    <dbReference type="NCBI Taxonomy" id="4550"/>
    <lineage>
        <taxon>Eukaryota</taxon>
        <taxon>Viridiplantae</taxon>
        <taxon>Streptophyta</taxon>
        <taxon>Embryophyta</taxon>
        <taxon>Tracheophyta</taxon>
        <taxon>Spermatophyta</taxon>
        <taxon>Magnoliopsida</taxon>
        <taxon>Liliopsida</taxon>
        <taxon>Poales</taxon>
        <taxon>Poaceae</taxon>
        <taxon>BOP clade</taxon>
        <taxon>Pooideae</taxon>
        <taxon>Triticodae</taxon>
        <taxon>Triticeae</taxon>
        <taxon>Hordeinae</taxon>
        <taxon>Secale</taxon>
    </lineage>
</organism>
<dbReference type="SMR" id="P83048"/>
<dbReference type="GO" id="GO:0005576">
    <property type="term" value="C:extracellular region"/>
    <property type="evidence" value="ECO:0007669"/>
    <property type="project" value="UniProtKB-SubCell"/>
</dbReference>
<dbReference type="GO" id="GO:0015066">
    <property type="term" value="F:alpha-amylase inhibitor activity"/>
    <property type="evidence" value="ECO:0007669"/>
    <property type="project" value="UniProtKB-KW"/>
</dbReference>
<name>IAA_SECCE</name>
<reference evidence="3" key="1">
    <citation type="journal article" date="2000" name="Int. J. Biochem. Cell Biol.">
        <title>Purification, biochemical characterisation and partial primary structure of a new alpha-amylase inhibitor from Secale cereale (rye).</title>
        <authorList>
            <person name="Iulek J."/>
            <person name="Franco O.L."/>
            <person name="Silva M."/>
            <person name="Slivinski C.T."/>
            <person name="Bloch C. Jr."/>
            <person name="Rigden D.J."/>
            <person name="Grossi de Sa M.F."/>
        </authorList>
    </citation>
    <scope>PROTEIN SEQUENCE</scope>
    <scope>FUNCTION</scope>
    <scope>SUBUNIT</scope>
    <scope>MASS SPECTROMETRY</scope>
    <source>
        <strain>cv. BR-1 EST 96-66061</strain>
        <tissue>Seed cotyledon</tissue>
    </source>
</reference>
<evidence type="ECO:0000269" key="1">
    <source>
    </source>
</evidence>
<evidence type="ECO:0000303" key="2">
    <source>
    </source>
</evidence>
<evidence type="ECO:0000305" key="3"/>
<accession>P83048</accession>
<keyword id="KW-0022">Alpha-amylase inhibitor</keyword>
<keyword id="KW-0903">Direct protein sequencing</keyword>
<keyword id="KW-0325">Glycoprotein</keyword>
<keyword id="KW-0964">Secreted</keyword>
<sequence length="25" mass="2713">SEDCTPWTATPITVLAGCRDYVGEQ</sequence>
<comment type="function">
    <text evidence="1">Inhibits alpha-amylases but not trypsin. Is more effective against insect alpha-amylases than those of mammals.</text>
</comment>
<comment type="subunit">
    <text evidence="1">Monomer or homodimer.</text>
</comment>
<comment type="subcellular location">
    <subcellularLocation>
        <location>Secreted</location>
    </subcellularLocation>
</comment>
<comment type="PTM">
    <text evidence="2">May exist both in a glycosylated and in an unglycosylated form.</text>
</comment>
<comment type="mass spectrometry" mass="13676.0" method="MALDI" evidence="1"/>
<comment type="similarity">
    <text evidence="3">Belongs to the protease inhibitor I6 (cereal trypsin/alpha-amylase inhibitor) family.</text>
</comment>